<comment type="function">
    <text evidence="4 5 7">Transcription factor that binds to the DNA sequence 5'-CANNTG-3'(E box) and the G-box motif. Directly binds to a guanine-rich region of the PCNA promoter and up-regulates its expression which in turn induces cell transformation and tumor formation. May play an important role in the regulation of cell proliferation and differentiation during spermatogenesis.</text>
</comment>
<comment type="subunit">
    <text evidence="6">Interacts with PPP1CC isoform gamma-2. This interaction can prevent SPZ1 binding to the E-box and inhibits PPP1CC activity.</text>
</comment>
<comment type="subcellular location">
    <subcellularLocation>
        <location evidence="6">Cytoplasm</location>
    </subcellularLocation>
    <subcellularLocation>
        <location evidence="4 6">Nucleus</location>
    </subcellularLocation>
</comment>
<comment type="tissue specificity">
    <text evidence="4 5 7">Expressed specifically in the testis and epidydimis. In the testis expressed in both germ cells and somatic cells (Sertoli and Leydig cells). Expressed in several tumor cell lines.</text>
</comment>
<comment type="developmental stage">
    <text evidence="4">First detected in the testis at postnatal day 10 and levels increase further and reach highest levels at day 40 and then gradually decrease.</text>
</comment>
<comment type="induction">
    <text evidence="4">Down-regulated by testosterone and retinoic acid.</text>
</comment>
<comment type="PTM">
    <text evidence="7">Phosphorylated by MAPK1/ERK2 and MAPK3/ERK1.</text>
</comment>
<comment type="miscellaneous">
    <text>The helix-loop-helix and basic motifs form a Spz1 specific bHLH different from the classical one.</text>
</comment>
<organism>
    <name type="scientific">Mus musculus</name>
    <name type="common">Mouse</name>
    <dbReference type="NCBI Taxonomy" id="10090"/>
    <lineage>
        <taxon>Eukaryota</taxon>
        <taxon>Metazoa</taxon>
        <taxon>Chordata</taxon>
        <taxon>Craniata</taxon>
        <taxon>Vertebrata</taxon>
        <taxon>Euteleostomi</taxon>
        <taxon>Mammalia</taxon>
        <taxon>Eutheria</taxon>
        <taxon>Euarchontoglires</taxon>
        <taxon>Glires</taxon>
        <taxon>Rodentia</taxon>
        <taxon>Myomorpha</taxon>
        <taxon>Muroidea</taxon>
        <taxon>Muridae</taxon>
        <taxon>Murinae</taxon>
        <taxon>Mus</taxon>
        <taxon>Mus</taxon>
    </lineage>
</organism>
<gene>
    <name type="primary">Spz1</name>
</gene>
<accession>Q99MY0</accession>
<accession>Q3V487</accession>
<accession>Q80X69</accession>
<sequence length="378" mass="43091">MSDTDNSAEMPARCPSPNPAPGAKQEPPNSGITISLLEIGSLPTVCYHSFPPPKNSICPVEKRGRVQKFSNLLKDVKDVLKNIAGVEEKSTVGEPFDDAYIPEDLSELNVRGVEKKNKIRFKDDLFIHFDPEREQNTMKQMLLKNQSAKNMVPKFARDLCNAEETRGFDGMLLSVKRPRNGSLHLRGEYRKLRNNMEQLLQEADHWSKQHNELSELMRSYQECQNETQETTDKDRACLQNQPNNGLSTKQKLEEQVKKLSHDTHALHLIAALLENECQVLQQRVDILKDFHLHEAGLGHEKPLQMSCEQDKKCPKLAEADKTDAFKHTTRATEGTIRKPKILRSPDVCFTKKARNNRFNARVAKKSLVGKRRTVSSFR</sequence>
<name>SPZ1_MOUSE</name>
<feature type="chain" id="PRO_0000280508" description="Spermatogenic leucine zipper protein 1">
    <location>
        <begin position="1"/>
        <end position="378"/>
    </location>
</feature>
<feature type="region of interest" description="Disordered" evidence="3">
    <location>
        <begin position="1"/>
        <end position="31"/>
    </location>
</feature>
<feature type="region of interest" description="Helix-loop-helix motif" evidence="2">
    <location>
        <begin position="116"/>
        <end position="127"/>
    </location>
</feature>
<feature type="region of interest" description="Interaction with PPP1CC isoform gamma-2">
    <location>
        <begin position="116"/>
        <end position="122"/>
    </location>
</feature>
<feature type="region of interest" description="Basic motif" evidence="2">
    <location>
        <begin position="128"/>
        <end position="193"/>
    </location>
</feature>
<feature type="region of interest" description="Leucine-zipper">
    <location>
        <begin position="252"/>
        <end position="273"/>
    </location>
</feature>
<feature type="coiled-coil region" evidence="2">
    <location>
        <begin position="182"/>
        <end position="233"/>
    </location>
</feature>
<feature type="modified residue" description="Phosphoserine" evidence="1">
    <location>
        <position position="106"/>
    </location>
</feature>
<feature type="modified residue" description="Phosphoserine" evidence="1">
    <location>
        <position position="207"/>
    </location>
</feature>
<feature type="sequence conflict" description="In Ref. 2; BAE43195." evidence="8" ref="2">
    <original>H</original>
    <variation>Q</variation>
    <location>
        <position position="261"/>
    </location>
</feature>
<feature type="sequence conflict" description="In Ref. 3; AAH50748." evidence="8" ref="3">
    <original>L</original>
    <variation>P</variation>
    <location>
        <position position="297"/>
    </location>
</feature>
<reference key="1">
    <citation type="journal article" date="2001" name="Mech. Dev.">
        <title>Spz1, a novel bHLH-Zip protein, is specifically expressed in testis.</title>
        <authorList>
            <person name="Hsu S.-H."/>
            <person name="Shyu H.-W."/>
            <person name="Hsieh-Li H.-M."/>
            <person name="Li H."/>
        </authorList>
    </citation>
    <scope>NUCLEOTIDE SEQUENCE [MRNA]</scope>
    <scope>FUNCTION</scope>
    <scope>SUBCELLULAR LOCATION</scope>
    <scope>TISSUE SPECIFICITY</scope>
    <scope>INDUCTION</scope>
    <scope>DEVELOPMENTAL STAGE</scope>
    <source>
        <strain>C57BL/6J</strain>
        <tissue>Testis</tissue>
    </source>
</reference>
<reference key="2">
    <citation type="journal article" date="2005" name="Science">
        <title>The transcriptional landscape of the mammalian genome.</title>
        <authorList>
            <person name="Carninci P."/>
            <person name="Kasukawa T."/>
            <person name="Katayama S."/>
            <person name="Gough J."/>
            <person name="Frith M.C."/>
            <person name="Maeda N."/>
            <person name="Oyama R."/>
            <person name="Ravasi T."/>
            <person name="Lenhard B."/>
            <person name="Wells C."/>
            <person name="Kodzius R."/>
            <person name="Shimokawa K."/>
            <person name="Bajic V.B."/>
            <person name="Brenner S.E."/>
            <person name="Batalov S."/>
            <person name="Forrest A.R."/>
            <person name="Zavolan M."/>
            <person name="Davis M.J."/>
            <person name="Wilming L.G."/>
            <person name="Aidinis V."/>
            <person name="Allen J.E."/>
            <person name="Ambesi-Impiombato A."/>
            <person name="Apweiler R."/>
            <person name="Aturaliya R.N."/>
            <person name="Bailey T.L."/>
            <person name="Bansal M."/>
            <person name="Baxter L."/>
            <person name="Beisel K.W."/>
            <person name="Bersano T."/>
            <person name="Bono H."/>
            <person name="Chalk A.M."/>
            <person name="Chiu K.P."/>
            <person name="Choudhary V."/>
            <person name="Christoffels A."/>
            <person name="Clutterbuck D.R."/>
            <person name="Crowe M.L."/>
            <person name="Dalla E."/>
            <person name="Dalrymple B.P."/>
            <person name="de Bono B."/>
            <person name="Della Gatta G."/>
            <person name="di Bernardo D."/>
            <person name="Down T."/>
            <person name="Engstrom P."/>
            <person name="Fagiolini M."/>
            <person name="Faulkner G."/>
            <person name="Fletcher C.F."/>
            <person name="Fukushima T."/>
            <person name="Furuno M."/>
            <person name="Futaki S."/>
            <person name="Gariboldi M."/>
            <person name="Georgii-Hemming P."/>
            <person name="Gingeras T.R."/>
            <person name="Gojobori T."/>
            <person name="Green R.E."/>
            <person name="Gustincich S."/>
            <person name="Harbers M."/>
            <person name="Hayashi Y."/>
            <person name="Hensch T.K."/>
            <person name="Hirokawa N."/>
            <person name="Hill D."/>
            <person name="Huminiecki L."/>
            <person name="Iacono M."/>
            <person name="Ikeo K."/>
            <person name="Iwama A."/>
            <person name="Ishikawa T."/>
            <person name="Jakt M."/>
            <person name="Kanapin A."/>
            <person name="Katoh M."/>
            <person name="Kawasawa Y."/>
            <person name="Kelso J."/>
            <person name="Kitamura H."/>
            <person name="Kitano H."/>
            <person name="Kollias G."/>
            <person name="Krishnan S.P."/>
            <person name="Kruger A."/>
            <person name="Kummerfeld S.K."/>
            <person name="Kurochkin I.V."/>
            <person name="Lareau L.F."/>
            <person name="Lazarevic D."/>
            <person name="Lipovich L."/>
            <person name="Liu J."/>
            <person name="Liuni S."/>
            <person name="McWilliam S."/>
            <person name="Madan Babu M."/>
            <person name="Madera M."/>
            <person name="Marchionni L."/>
            <person name="Matsuda H."/>
            <person name="Matsuzawa S."/>
            <person name="Miki H."/>
            <person name="Mignone F."/>
            <person name="Miyake S."/>
            <person name="Morris K."/>
            <person name="Mottagui-Tabar S."/>
            <person name="Mulder N."/>
            <person name="Nakano N."/>
            <person name="Nakauchi H."/>
            <person name="Ng P."/>
            <person name="Nilsson R."/>
            <person name="Nishiguchi S."/>
            <person name="Nishikawa S."/>
            <person name="Nori F."/>
            <person name="Ohara O."/>
            <person name="Okazaki Y."/>
            <person name="Orlando V."/>
            <person name="Pang K.C."/>
            <person name="Pavan W.J."/>
            <person name="Pavesi G."/>
            <person name="Pesole G."/>
            <person name="Petrovsky N."/>
            <person name="Piazza S."/>
            <person name="Reed J."/>
            <person name="Reid J.F."/>
            <person name="Ring B.Z."/>
            <person name="Ringwald M."/>
            <person name="Rost B."/>
            <person name="Ruan Y."/>
            <person name="Salzberg S.L."/>
            <person name="Sandelin A."/>
            <person name="Schneider C."/>
            <person name="Schoenbach C."/>
            <person name="Sekiguchi K."/>
            <person name="Semple C.A."/>
            <person name="Seno S."/>
            <person name="Sessa L."/>
            <person name="Sheng Y."/>
            <person name="Shibata Y."/>
            <person name="Shimada H."/>
            <person name="Shimada K."/>
            <person name="Silva D."/>
            <person name="Sinclair B."/>
            <person name="Sperling S."/>
            <person name="Stupka E."/>
            <person name="Sugiura K."/>
            <person name="Sultana R."/>
            <person name="Takenaka Y."/>
            <person name="Taki K."/>
            <person name="Tammoja K."/>
            <person name="Tan S.L."/>
            <person name="Tang S."/>
            <person name="Taylor M.S."/>
            <person name="Tegner J."/>
            <person name="Teichmann S.A."/>
            <person name="Ueda H.R."/>
            <person name="van Nimwegen E."/>
            <person name="Verardo R."/>
            <person name="Wei C.L."/>
            <person name="Yagi K."/>
            <person name="Yamanishi H."/>
            <person name="Zabarovsky E."/>
            <person name="Zhu S."/>
            <person name="Zimmer A."/>
            <person name="Hide W."/>
            <person name="Bult C."/>
            <person name="Grimmond S.M."/>
            <person name="Teasdale R.D."/>
            <person name="Liu E.T."/>
            <person name="Brusic V."/>
            <person name="Quackenbush J."/>
            <person name="Wahlestedt C."/>
            <person name="Mattick J.S."/>
            <person name="Hume D.A."/>
            <person name="Kai C."/>
            <person name="Sasaki D."/>
            <person name="Tomaru Y."/>
            <person name="Fukuda S."/>
            <person name="Kanamori-Katayama M."/>
            <person name="Suzuki M."/>
            <person name="Aoki J."/>
            <person name="Arakawa T."/>
            <person name="Iida J."/>
            <person name="Imamura K."/>
            <person name="Itoh M."/>
            <person name="Kato T."/>
            <person name="Kawaji H."/>
            <person name="Kawagashira N."/>
            <person name="Kawashima T."/>
            <person name="Kojima M."/>
            <person name="Kondo S."/>
            <person name="Konno H."/>
            <person name="Nakano K."/>
            <person name="Ninomiya N."/>
            <person name="Nishio T."/>
            <person name="Okada M."/>
            <person name="Plessy C."/>
            <person name="Shibata K."/>
            <person name="Shiraki T."/>
            <person name="Suzuki S."/>
            <person name="Tagami M."/>
            <person name="Waki K."/>
            <person name="Watahiki A."/>
            <person name="Okamura-Oho Y."/>
            <person name="Suzuki H."/>
            <person name="Kawai J."/>
            <person name="Hayashizaki Y."/>
        </authorList>
    </citation>
    <scope>NUCLEOTIDE SEQUENCE [LARGE SCALE MRNA]</scope>
    <source>
        <strain>C57BL/6J</strain>
        <tissue>Testis</tissue>
    </source>
</reference>
<reference key="3">
    <citation type="journal article" date="2004" name="Genome Res.">
        <title>The status, quality, and expansion of the NIH full-length cDNA project: the Mammalian Gene Collection (MGC).</title>
        <authorList>
            <consortium name="The MGC Project Team"/>
        </authorList>
    </citation>
    <scope>NUCLEOTIDE SEQUENCE [LARGE SCALE MRNA]</scope>
    <source>
        <tissue>Testis</tissue>
    </source>
</reference>
<reference key="4">
    <citation type="journal article" date="2004" name="J. Biol. Chem.">
        <title>Identification of the spermatogenic zip protein Spz1 as a putative protein phosphatase-1 (PP1) regulatory protein that specifically binds the PP1cgamma2 splice variant in mouse testis.</title>
        <authorList>
            <person name="Hrabchak C."/>
            <person name="Varmuza S."/>
        </authorList>
    </citation>
    <scope>SUBCELLULAR LOCATION</scope>
    <scope>INTERACTION WITH PPP1CC ISOFORM GAMMA-2</scope>
</reference>
<reference key="5">
    <citation type="journal article" date="2004" name="Exp. Cell Res.">
        <title>Dysfunctional spermatogenesis in transgenic mice overexpressing bHLH-Zip transcription factor, Spz1.</title>
        <authorList>
            <person name="Hsu S.-H."/>
            <person name="Hsieh-Li H.-M."/>
            <person name="Li H."/>
        </authorList>
    </citation>
    <scope>FUNCTION</scope>
    <scope>TISSUE SPECIFICITY</scope>
</reference>
<reference key="6">
    <citation type="journal article" date="2005" name="Cancer Res.">
        <title>bHLH-zip transcription factor Spz1 mediates mitogen-activated protein kinase cell proliferation, transformation, and tumorigenesis.</title>
        <authorList>
            <person name="Hsu S.-H."/>
            <person name="Hsieh-Li H.-M."/>
            <person name="Huang H.-Y."/>
            <person name="Huang P.-H."/>
            <person name="Li H."/>
        </authorList>
    </citation>
    <scope>FUNCTION</scope>
    <scope>TISSUE SPECIFICITY</scope>
    <scope>PHOSPHORYLATION</scope>
</reference>
<dbReference type="EMBL" id="AF271697">
    <property type="protein sequence ID" value="AAK15458.1"/>
    <property type="molecule type" value="mRNA"/>
</dbReference>
<dbReference type="EMBL" id="AK006437">
    <property type="protein sequence ID" value="BAE43195.1"/>
    <property type="molecule type" value="mRNA"/>
</dbReference>
<dbReference type="EMBL" id="BC050748">
    <property type="protein sequence ID" value="AAH50748.1"/>
    <property type="molecule type" value="mRNA"/>
</dbReference>
<dbReference type="CCDS" id="CCDS26683.1"/>
<dbReference type="RefSeq" id="NP_084513.3">
    <property type="nucleotide sequence ID" value="NM_030237.3"/>
</dbReference>
<dbReference type="SMR" id="Q99MY0"/>
<dbReference type="FunCoup" id="Q99MY0">
    <property type="interactions" value="383"/>
</dbReference>
<dbReference type="STRING" id="10090.ENSMUSP00000054083"/>
<dbReference type="PhosphoSitePlus" id="Q99MY0"/>
<dbReference type="PaxDb" id="10090-ENSMUSP00000054083"/>
<dbReference type="ProteomicsDB" id="261582"/>
<dbReference type="Antibodypedia" id="44374">
    <property type="antibodies" value="114 antibodies from 24 providers"/>
</dbReference>
<dbReference type="DNASU" id="79401"/>
<dbReference type="Ensembl" id="ENSMUST00000050658.6">
    <property type="protein sequence ID" value="ENSMUSP00000054083.5"/>
    <property type="gene ID" value="ENSMUSG00000046957.6"/>
</dbReference>
<dbReference type="GeneID" id="79401"/>
<dbReference type="KEGG" id="mmu:79401"/>
<dbReference type="UCSC" id="uc007rkr.2">
    <property type="organism name" value="mouse"/>
</dbReference>
<dbReference type="AGR" id="MGI:1930801"/>
<dbReference type="CTD" id="84654"/>
<dbReference type="MGI" id="MGI:1930801">
    <property type="gene designation" value="Spz1"/>
</dbReference>
<dbReference type="VEuPathDB" id="HostDB:ENSMUSG00000046957"/>
<dbReference type="eggNOG" id="ENOG502QS87">
    <property type="taxonomic scope" value="Eukaryota"/>
</dbReference>
<dbReference type="GeneTree" id="ENSGT00950000182767"/>
<dbReference type="HOGENOM" id="CLU_062447_0_0_1"/>
<dbReference type="InParanoid" id="Q99MY0"/>
<dbReference type="OMA" id="ECQILEQ"/>
<dbReference type="OrthoDB" id="9830670at2759"/>
<dbReference type="PhylomeDB" id="Q99MY0"/>
<dbReference type="TreeFam" id="TF337798"/>
<dbReference type="BioGRID-ORCS" id="79401">
    <property type="hits" value="4 hits in 75 CRISPR screens"/>
</dbReference>
<dbReference type="PRO" id="PR:Q99MY0"/>
<dbReference type="Proteomes" id="UP000000589">
    <property type="component" value="Chromosome 13"/>
</dbReference>
<dbReference type="RNAct" id="Q99MY0">
    <property type="molecule type" value="protein"/>
</dbReference>
<dbReference type="Bgee" id="ENSMUSG00000046957">
    <property type="expression patterns" value="Expressed in seminiferous tubule of testis and 15 other cell types or tissues"/>
</dbReference>
<dbReference type="GO" id="GO:0005737">
    <property type="term" value="C:cytoplasm"/>
    <property type="evidence" value="ECO:0007669"/>
    <property type="project" value="UniProtKB-SubCell"/>
</dbReference>
<dbReference type="GO" id="GO:0005634">
    <property type="term" value="C:nucleus"/>
    <property type="evidence" value="ECO:0000314"/>
    <property type="project" value="MGI"/>
</dbReference>
<dbReference type="GO" id="GO:0003700">
    <property type="term" value="F:DNA-binding transcription factor activity"/>
    <property type="evidence" value="ECO:0000304"/>
    <property type="project" value="MGI"/>
</dbReference>
<dbReference type="GO" id="GO:0000981">
    <property type="term" value="F:DNA-binding transcription factor activity, RNA polymerase II-specific"/>
    <property type="evidence" value="ECO:0000314"/>
    <property type="project" value="MGI"/>
</dbReference>
<dbReference type="GO" id="GO:0070888">
    <property type="term" value="F:E-box binding"/>
    <property type="evidence" value="ECO:0000314"/>
    <property type="project" value="MGI"/>
</dbReference>
<dbReference type="GO" id="GO:0045944">
    <property type="term" value="P:positive regulation of transcription by RNA polymerase II"/>
    <property type="evidence" value="ECO:0000314"/>
    <property type="project" value="MGI"/>
</dbReference>
<dbReference type="InterPro" id="IPR042961">
    <property type="entry name" value="Spz1"/>
</dbReference>
<dbReference type="PANTHER" id="PTHR47889">
    <property type="entry name" value="SPERMATOGENIC LEUCINE ZIPPER PROTEIN 1"/>
    <property type="match status" value="1"/>
</dbReference>
<dbReference type="PANTHER" id="PTHR47889:SF1">
    <property type="entry name" value="SPERMATOGENIC LEUCINE ZIPPER PROTEIN 1"/>
    <property type="match status" value="1"/>
</dbReference>
<evidence type="ECO:0000250" key="1">
    <source>
        <dbReference type="UniProtKB" id="Q6AXY9"/>
    </source>
</evidence>
<evidence type="ECO:0000255" key="2"/>
<evidence type="ECO:0000256" key="3">
    <source>
        <dbReference type="SAM" id="MobiDB-lite"/>
    </source>
</evidence>
<evidence type="ECO:0000269" key="4">
    <source>
    </source>
</evidence>
<evidence type="ECO:0000269" key="5">
    <source>
    </source>
</evidence>
<evidence type="ECO:0000269" key="6">
    <source>
    </source>
</evidence>
<evidence type="ECO:0000269" key="7">
    <source>
    </source>
</evidence>
<evidence type="ECO:0000305" key="8"/>
<protein>
    <recommendedName>
        <fullName>Spermatogenic leucine zipper protein 1</fullName>
    </recommendedName>
    <alternativeName>
        <fullName>BHLH-Zip transcription factor SPZ1</fullName>
    </alternativeName>
    <alternativeName>
        <fullName>Spermatogenic Zip 1</fullName>
    </alternativeName>
</protein>
<proteinExistence type="evidence at protein level"/>
<keyword id="KW-0175">Coiled coil</keyword>
<keyword id="KW-0963">Cytoplasm</keyword>
<keyword id="KW-0238">DNA-binding</keyword>
<keyword id="KW-0539">Nucleus</keyword>
<keyword id="KW-0597">Phosphoprotein</keyword>
<keyword id="KW-0656">Proto-oncogene</keyword>
<keyword id="KW-1185">Reference proteome</keyword>
<keyword id="KW-0804">Transcription</keyword>
<keyword id="KW-0805">Transcription regulation</keyword>